<keyword id="KW-0687">Ribonucleoprotein</keyword>
<keyword id="KW-0689">Ribosomal protein</keyword>
<keyword id="KW-0694">RNA-binding</keyword>
<keyword id="KW-0699">rRNA-binding</keyword>
<gene>
    <name evidence="1" type="primary">rplN</name>
    <name type="ordered locus">SaurJH1_2308</name>
</gene>
<sequence>MIQQETRLKVADNSGAREVLTIKVLGGSGRKTANIGDVIVCTVKNATPGGVVKKGDVVKAVIVRTKSGVRRNDGSYIKFDENACVIIRDDKGPRGTRIFGPVARELREGNFMKIVSLAPEVL</sequence>
<feature type="chain" id="PRO_1000087151" description="Large ribosomal subunit protein uL14">
    <location>
        <begin position="1"/>
        <end position="122"/>
    </location>
</feature>
<protein>
    <recommendedName>
        <fullName evidence="1">Large ribosomal subunit protein uL14</fullName>
    </recommendedName>
    <alternativeName>
        <fullName evidence="2">50S ribosomal protein L14</fullName>
    </alternativeName>
</protein>
<accession>A6U3W5</accession>
<name>RL14_STAA2</name>
<dbReference type="EMBL" id="CP000736">
    <property type="protein sequence ID" value="ABR53133.1"/>
    <property type="molecule type" value="Genomic_DNA"/>
</dbReference>
<dbReference type="SMR" id="A6U3W5"/>
<dbReference type="KEGG" id="sah:SaurJH1_2308"/>
<dbReference type="HOGENOM" id="CLU_095071_2_1_9"/>
<dbReference type="GO" id="GO:0022625">
    <property type="term" value="C:cytosolic large ribosomal subunit"/>
    <property type="evidence" value="ECO:0007669"/>
    <property type="project" value="TreeGrafter"/>
</dbReference>
<dbReference type="GO" id="GO:0070180">
    <property type="term" value="F:large ribosomal subunit rRNA binding"/>
    <property type="evidence" value="ECO:0007669"/>
    <property type="project" value="TreeGrafter"/>
</dbReference>
<dbReference type="GO" id="GO:0003735">
    <property type="term" value="F:structural constituent of ribosome"/>
    <property type="evidence" value="ECO:0007669"/>
    <property type="project" value="InterPro"/>
</dbReference>
<dbReference type="GO" id="GO:0006412">
    <property type="term" value="P:translation"/>
    <property type="evidence" value="ECO:0007669"/>
    <property type="project" value="UniProtKB-UniRule"/>
</dbReference>
<dbReference type="CDD" id="cd00337">
    <property type="entry name" value="Ribosomal_uL14"/>
    <property type="match status" value="1"/>
</dbReference>
<dbReference type="FunFam" id="2.40.150.20:FF:000001">
    <property type="entry name" value="50S ribosomal protein L14"/>
    <property type="match status" value="1"/>
</dbReference>
<dbReference type="Gene3D" id="2.40.150.20">
    <property type="entry name" value="Ribosomal protein L14"/>
    <property type="match status" value="1"/>
</dbReference>
<dbReference type="HAMAP" id="MF_01367">
    <property type="entry name" value="Ribosomal_uL14"/>
    <property type="match status" value="1"/>
</dbReference>
<dbReference type="InterPro" id="IPR000218">
    <property type="entry name" value="Ribosomal_uL14"/>
</dbReference>
<dbReference type="InterPro" id="IPR005745">
    <property type="entry name" value="Ribosomal_uL14_bac-type"/>
</dbReference>
<dbReference type="InterPro" id="IPR019972">
    <property type="entry name" value="Ribosomal_uL14_CS"/>
</dbReference>
<dbReference type="InterPro" id="IPR036853">
    <property type="entry name" value="Ribosomal_uL14_sf"/>
</dbReference>
<dbReference type="NCBIfam" id="TIGR01067">
    <property type="entry name" value="rplN_bact"/>
    <property type="match status" value="1"/>
</dbReference>
<dbReference type="PANTHER" id="PTHR11761">
    <property type="entry name" value="50S/60S RIBOSOMAL PROTEIN L14/L23"/>
    <property type="match status" value="1"/>
</dbReference>
<dbReference type="PANTHER" id="PTHR11761:SF3">
    <property type="entry name" value="LARGE RIBOSOMAL SUBUNIT PROTEIN UL14M"/>
    <property type="match status" value="1"/>
</dbReference>
<dbReference type="Pfam" id="PF00238">
    <property type="entry name" value="Ribosomal_L14"/>
    <property type="match status" value="1"/>
</dbReference>
<dbReference type="SMART" id="SM01374">
    <property type="entry name" value="Ribosomal_L14"/>
    <property type="match status" value="1"/>
</dbReference>
<dbReference type="SUPFAM" id="SSF50193">
    <property type="entry name" value="Ribosomal protein L14"/>
    <property type="match status" value="1"/>
</dbReference>
<dbReference type="PROSITE" id="PS00049">
    <property type="entry name" value="RIBOSOMAL_L14"/>
    <property type="match status" value="1"/>
</dbReference>
<comment type="function">
    <text evidence="1">Binds to 23S rRNA. Forms part of two intersubunit bridges in the 70S ribosome.</text>
</comment>
<comment type="subunit">
    <text evidence="1">Part of the 50S ribosomal subunit. Forms a cluster with proteins L3 and L19. In the 70S ribosome, L14 and L19 interact and together make contacts with the 16S rRNA in bridges B5 and B8.</text>
</comment>
<comment type="similarity">
    <text evidence="1">Belongs to the universal ribosomal protein uL14 family.</text>
</comment>
<proteinExistence type="inferred from homology"/>
<evidence type="ECO:0000255" key="1">
    <source>
        <dbReference type="HAMAP-Rule" id="MF_01367"/>
    </source>
</evidence>
<evidence type="ECO:0000305" key="2"/>
<organism>
    <name type="scientific">Staphylococcus aureus (strain JH1)</name>
    <dbReference type="NCBI Taxonomy" id="359787"/>
    <lineage>
        <taxon>Bacteria</taxon>
        <taxon>Bacillati</taxon>
        <taxon>Bacillota</taxon>
        <taxon>Bacilli</taxon>
        <taxon>Bacillales</taxon>
        <taxon>Staphylococcaceae</taxon>
        <taxon>Staphylococcus</taxon>
    </lineage>
</organism>
<reference key="1">
    <citation type="submission" date="2007-06" db="EMBL/GenBank/DDBJ databases">
        <title>Complete sequence of chromosome of Staphylococcus aureus subsp. aureus JH1.</title>
        <authorList>
            <consortium name="US DOE Joint Genome Institute"/>
            <person name="Copeland A."/>
            <person name="Lucas S."/>
            <person name="Lapidus A."/>
            <person name="Barry K."/>
            <person name="Detter J.C."/>
            <person name="Glavina del Rio T."/>
            <person name="Hammon N."/>
            <person name="Israni S."/>
            <person name="Dalin E."/>
            <person name="Tice H."/>
            <person name="Pitluck S."/>
            <person name="Chain P."/>
            <person name="Malfatti S."/>
            <person name="Shin M."/>
            <person name="Vergez L."/>
            <person name="Schmutz J."/>
            <person name="Larimer F."/>
            <person name="Land M."/>
            <person name="Hauser L."/>
            <person name="Kyrpides N."/>
            <person name="Ivanova N."/>
            <person name="Tomasz A."/>
            <person name="Richardson P."/>
        </authorList>
    </citation>
    <scope>NUCLEOTIDE SEQUENCE [LARGE SCALE GENOMIC DNA]</scope>
    <source>
        <strain>JH1</strain>
    </source>
</reference>